<protein>
    <recommendedName>
        <fullName evidence="1">Deoxyguanosinetriphosphate triphosphohydrolase-like protein</fullName>
    </recommendedName>
</protein>
<keyword id="KW-0378">Hydrolase</keyword>
<reference key="1">
    <citation type="journal article" date="2006" name="PLoS Genet.">
        <title>Comparative genomics of emerging human ehrlichiosis agents.</title>
        <authorList>
            <person name="Dunning Hotopp J.C."/>
            <person name="Lin M."/>
            <person name="Madupu R."/>
            <person name="Crabtree J."/>
            <person name="Angiuoli S.V."/>
            <person name="Eisen J.A."/>
            <person name="Seshadri R."/>
            <person name="Ren Q."/>
            <person name="Wu M."/>
            <person name="Utterback T.R."/>
            <person name="Smith S."/>
            <person name="Lewis M."/>
            <person name="Khouri H."/>
            <person name="Zhang C."/>
            <person name="Niu H."/>
            <person name="Lin Q."/>
            <person name="Ohashi N."/>
            <person name="Zhi N."/>
            <person name="Nelson W.C."/>
            <person name="Brinkac L.M."/>
            <person name="Dodson R.J."/>
            <person name="Rosovitz M.J."/>
            <person name="Sundaram J.P."/>
            <person name="Daugherty S.C."/>
            <person name="Davidsen T."/>
            <person name="Durkin A.S."/>
            <person name="Gwinn M.L."/>
            <person name="Haft D.H."/>
            <person name="Selengut J.D."/>
            <person name="Sullivan S.A."/>
            <person name="Zafar N."/>
            <person name="Zhou L."/>
            <person name="Benahmed F."/>
            <person name="Forberger H."/>
            <person name="Halpin R."/>
            <person name="Mulligan S."/>
            <person name="Robinson J."/>
            <person name="White O."/>
            <person name="Rikihisa Y."/>
            <person name="Tettelin H."/>
        </authorList>
    </citation>
    <scope>NUCLEOTIDE SEQUENCE [LARGE SCALE GENOMIC DNA]</scope>
    <source>
        <strain>ATCC VR-367 / Miyayama</strain>
    </source>
</reference>
<gene>
    <name type="ordered locus">NSE_0460</name>
</gene>
<sequence length="385" mass="45172">MLSSYSSFPERSKGRLFLEKEDPQRDCYQRDRDRLIHSSAFRRLMYKTQVFSHCGDDHYRTRLTHSLEVAQIARSIARLLGLNEDLTETIALAHDIGHPPFAHIGEEALQEVAAEHYRFEHNAQVLRILGEFEHQYMDFDGLNLTWETIEGLAKHNGPIQEPHQIIEEYNGLLDLELNKQPSLEAQIVSLADDIAYSSHDIDDGLLSGVITYQDLRHLPIIGENILKFEKTFPEASKSQVMYKARRRMIRFLIYDVVDVARENIKRYLLKTVDDIRELGFPAANFSEKVGKEMKEIKAFLYNNLYFYYSIRKSRVKLKRIVKELFEVFFHDPQCLPKDYYERFRIADSMNKKAQLVCDFIANLTDSSAIREHRQFFSTCVLERDY</sequence>
<accession>Q2GDV1</accession>
<name>DGTL1_NEOSM</name>
<proteinExistence type="inferred from homology"/>
<organism>
    <name type="scientific">Neorickettsia sennetsu (strain ATCC VR-367 / Miyayama)</name>
    <name type="common">Ehrlichia sennetsu</name>
    <dbReference type="NCBI Taxonomy" id="222891"/>
    <lineage>
        <taxon>Bacteria</taxon>
        <taxon>Pseudomonadati</taxon>
        <taxon>Pseudomonadota</taxon>
        <taxon>Alphaproteobacteria</taxon>
        <taxon>Rickettsiales</taxon>
        <taxon>Anaplasmataceae</taxon>
        <taxon>Neorickettsia</taxon>
    </lineage>
</organism>
<dbReference type="EMBL" id="CP000237">
    <property type="protein sequence ID" value="ABD46434.1"/>
    <property type="molecule type" value="Genomic_DNA"/>
</dbReference>
<dbReference type="RefSeq" id="WP_011451851.1">
    <property type="nucleotide sequence ID" value="NC_007798.1"/>
</dbReference>
<dbReference type="SMR" id="Q2GDV1"/>
<dbReference type="STRING" id="222891.NSE_0460"/>
<dbReference type="KEGG" id="nse:NSE_0460"/>
<dbReference type="eggNOG" id="COG0232">
    <property type="taxonomic scope" value="Bacteria"/>
</dbReference>
<dbReference type="HOGENOM" id="CLU_028163_1_0_5"/>
<dbReference type="OrthoDB" id="9803619at2"/>
<dbReference type="Proteomes" id="UP000001942">
    <property type="component" value="Chromosome"/>
</dbReference>
<dbReference type="GO" id="GO:0008832">
    <property type="term" value="F:dGTPase activity"/>
    <property type="evidence" value="ECO:0007669"/>
    <property type="project" value="TreeGrafter"/>
</dbReference>
<dbReference type="GO" id="GO:0006203">
    <property type="term" value="P:dGTP catabolic process"/>
    <property type="evidence" value="ECO:0007669"/>
    <property type="project" value="TreeGrafter"/>
</dbReference>
<dbReference type="CDD" id="cd00077">
    <property type="entry name" value="HDc"/>
    <property type="match status" value="1"/>
</dbReference>
<dbReference type="Gene3D" id="1.10.3210.10">
    <property type="entry name" value="Hypothetical protein af1432"/>
    <property type="match status" value="1"/>
</dbReference>
<dbReference type="HAMAP" id="MF_01212">
    <property type="entry name" value="dGTPase_type2"/>
    <property type="match status" value="1"/>
</dbReference>
<dbReference type="InterPro" id="IPR006261">
    <property type="entry name" value="dGTPase"/>
</dbReference>
<dbReference type="InterPro" id="IPR050135">
    <property type="entry name" value="dGTPase-like"/>
</dbReference>
<dbReference type="InterPro" id="IPR023023">
    <property type="entry name" value="dNTPase_2"/>
</dbReference>
<dbReference type="InterPro" id="IPR003607">
    <property type="entry name" value="HD/PDEase_dom"/>
</dbReference>
<dbReference type="InterPro" id="IPR006674">
    <property type="entry name" value="HD_domain"/>
</dbReference>
<dbReference type="InterPro" id="IPR006675">
    <property type="entry name" value="HDIG_dom"/>
</dbReference>
<dbReference type="InterPro" id="IPR026875">
    <property type="entry name" value="PHydrolase_assoc_dom"/>
</dbReference>
<dbReference type="NCBIfam" id="TIGR01353">
    <property type="entry name" value="dGTP_triPase"/>
    <property type="match status" value="1"/>
</dbReference>
<dbReference type="NCBIfam" id="TIGR00277">
    <property type="entry name" value="HDIG"/>
    <property type="match status" value="1"/>
</dbReference>
<dbReference type="NCBIfam" id="NF002326">
    <property type="entry name" value="PRK01286.1-1"/>
    <property type="match status" value="1"/>
</dbReference>
<dbReference type="PANTHER" id="PTHR11373:SF43">
    <property type="entry name" value="DEOXYGUANOSINETRIPHOSPHATE TRIPHOSPHOHYDROLASE-LIKE PROTEIN"/>
    <property type="match status" value="1"/>
</dbReference>
<dbReference type="PANTHER" id="PTHR11373">
    <property type="entry name" value="DEOXYNUCLEOSIDE TRIPHOSPHATE TRIPHOSPHOHYDROLASE"/>
    <property type="match status" value="1"/>
</dbReference>
<dbReference type="Pfam" id="PF01966">
    <property type="entry name" value="HD"/>
    <property type="match status" value="1"/>
</dbReference>
<dbReference type="Pfam" id="PF13286">
    <property type="entry name" value="HD_assoc"/>
    <property type="match status" value="1"/>
</dbReference>
<dbReference type="SMART" id="SM00471">
    <property type="entry name" value="HDc"/>
    <property type="match status" value="1"/>
</dbReference>
<dbReference type="SUPFAM" id="SSF109604">
    <property type="entry name" value="HD-domain/PDEase-like"/>
    <property type="match status" value="1"/>
</dbReference>
<dbReference type="PROSITE" id="PS51831">
    <property type="entry name" value="HD"/>
    <property type="match status" value="1"/>
</dbReference>
<feature type="chain" id="PRO_1000164734" description="Deoxyguanosinetriphosphate triphosphohydrolase-like protein">
    <location>
        <begin position="1"/>
        <end position="385"/>
    </location>
</feature>
<feature type="domain" description="HD" evidence="2">
    <location>
        <begin position="62"/>
        <end position="197"/>
    </location>
</feature>
<comment type="similarity">
    <text evidence="1">Belongs to the dGTPase family. Type 2 subfamily.</text>
</comment>
<evidence type="ECO:0000255" key="1">
    <source>
        <dbReference type="HAMAP-Rule" id="MF_01212"/>
    </source>
</evidence>
<evidence type="ECO:0000255" key="2">
    <source>
        <dbReference type="PROSITE-ProRule" id="PRU01175"/>
    </source>
</evidence>